<keyword id="KW-0963">Cytoplasm</keyword>
<keyword id="KW-0251">Elongation factor</keyword>
<keyword id="KW-0379">Hydroxylation</keyword>
<keyword id="KW-0648">Protein biosynthesis</keyword>
<proteinExistence type="inferred from homology"/>
<comment type="function">
    <text evidence="1">Involved in peptide bond synthesis. Alleviates ribosome stalling that occurs when 3 or more consecutive Pro residues or the sequence PPG is present in a protein, possibly by augmenting the peptidyl transferase activity of the ribosome. Modification of Lys-34 is required for alleviation.</text>
</comment>
<comment type="pathway">
    <text evidence="1">Protein biosynthesis; polypeptide chain elongation.</text>
</comment>
<comment type="subcellular location">
    <subcellularLocation>
        <location evidence="1">Cytoplasm</location>
    </subcellularLocation>
</comment>
<comment type="PTM">
    <text evidence="1">Is beta-lysylated on the epsilon-amino group of Lys-34 by the combined action of EpmA and EpmB, and then hydroxylated on the C5 position of the same residue by EpmC. Lysylation is critical for the stimulatory effect of EF-P on peptide-bond formation. The lysylation moiety would extend toward the peptidyltransferase center and stabilize the terminal 3-CCA end of the tRNA. The hydroxylation of the C5 position on Lys-34 would allow additional potential stabilizing hydrogen-bond interactions with the P-tRNA.</text>
</comment>
<comment type="similarity">
    <text evidence="1">Belongs to the elongation factor P family.</text>
</comment>
<accession>Q0T9P4</accession>
<dbReference type="EMBL" id="CP000247">
    <property type="protein sequence ID" value="ABG72335.1"/>
    <property type="molecule type" value="Genomic_DNA"/>
</dbReference>
<dbReference type="RefSeq" id="WP_000257278.1">
    <property type="nucleotide sequence ID" value="NC_008253.1"/>
</dbReference>
<dbReference type="SMR" id="Q0T9P4"/>
<dbReference type="GeneID" id="93777677"/>
<dbReference type="KEGG" id="ecp:ECP_4391"/>
<dbReference type="HOGENOM" id="CLU_074944_0_0_6"/>
<dbReference type="UniPathway" id="UPA00345"/>
<dbReference type="Proteomes" id="UP000009182">
    <property type="component" value="Chromosome"/>
</dbReference>
<dbReference type="GO" id="GO:0005829">
    <property type="term" value="C:cytosol"/>
    <property type="evidence" value="ECO:0007669"/>
    <property type="project" value="UniProtKB-ARBA"/>
</dbReference>
<dbReference type="GO" id="GO:0003746">
    <property type="term" value="F:translation elongation factor activity"/>
    <property type="evidence" value="ECO:0007669"/>
    <property type="project" value="UniProtKB-UniRule"/>
</dbReference>
<dbReference type="GO" id="GO:0043043">
    <property type="term" value="P:peptide biosynthetic process"/>
    <property type="evidence" value="ECO:0007669"/>
    <property type="project" value="InterPro"/>
</dbReference>
<dbReference type="CDD" id="cd04470">
    <property type="entry name" value="S1_EF-P_repeat_1"/>
    <property type="match status" value="1"/>
</dbReference>
<dbReference type="CDD" id="cd05794">
    <property type="entry name" value="S1_EF-P_repeat_2"/>
    <property type="match status" value="1"/>
</dbReference>
<dbReference type="FunFam" id="2.30.30.30:FF:000003">
    <property type="entry name" value="Elongation factor P"/>
    <property type="match status" value="1"/>
</dbReference>
<dbReference type="FunFam" id="2.40.50.140:FF:000004">
    <property type="entry name" value="Elongation factor P"/>
    <property type="match status" value="1"/>
</dbReference>
<dbReference type="FunFam" id="2.40.50.140:FF:000009">
    <property type="entry name" value="Elongation factor P"/>
    <property type="match status" value="1"/>
</dbReference>
<dbReference type="Gene3D" id="2.30.30.30">
    <property type="match status" value="1"/>
</dbReference>
<dbReference type="Gene3D" id="2.40.50.140">
    <property type="entry name" value="Nucleic acid-binding proteins"/>
    <property type="match status" value="2"/>
</dbReference>
<dbReference type="HAMAP" id="MF_00141">
    <property type="entry name" value="EF_P"/>
    <property type="match status" value="1"/>
</dbReference>
<dbReference type="InterPro" id="IPR015365">
    <property type="entry name" value="Elong-fact-P_C"/>
</dbReference>
<dbReference type="InterPro" id="IPR012340">
    <property type="entry name" value="NA-bd_OB-fold"/>
</dbReference>
<dbReference type="InterPro" id="IPR014722">
    <property type="entry name" value="Rib_uL2_dom2"/>
</dbReference>
<dbReference type="InterPro" id="IPR020599">
    <property type="entry name" value="Transl_elong_fac_P/YeiP"/>
</dbReference>
<dbReference type="InterPro" id="IPR013185">
    <property type="entry name" value="Transl_elong_KOW-like"/>
</dbReference>
<dbReference type="InterPro" id="IPR001059">
    <property type="entry name" value="Transl_elong_P/YeiP_cen"/>
</dbReference>
<dbReference type="InterPro" id="IPR013852">
    <property type="entry name" value="Transl_elong_P/YeiP_CS"/>
</dbReference>
<dbReference type="InterPro" id="IPR011768">
    <property type="entry name" value="Transl_elongation_fac_P"/>
</dbReference>
<dbReference type="InterPro" id="IPR008991">
    <property type="entry name" value="Translation_prot_SH3-like_sf"/>
</dbReference>
<dbReference type="NCBIfam" id="TIGR00038">
    <property type="entry name" value="efp"/>
    <property type="match status" value="1"/>
</dbReference>
<dbReference type="NCBIfam" id="NF001810">
    <property type="entry name" value="PRK00529.1"/>
    <property type="match status" value="1"/>
</dbReference>
<dbReference type="PANTHER" id="PTHR30053">
    <property type="entry name" value="ELONGATION FACTOR P"/>
    <property type="match status" value="1"/>
</dbReference>
<dbReference type="PANTHER" id="PTHR30053:SF12">
    <property type="entry name" value="ELONGATION FACTOR P (EF-P) FAMILY PROTEIN"/>
    <property type="match status" value="1"/>
</dbReference>
<dbReference type="Pfam" id="PF01132">
    <property type="entry name" value="EFP"/>
    <property type="match status" value="1"/>
</dbReference>
<dbReference type="Pfam" id="PF08207">
    <property type="entry name" value="EFP_N"/>
    <property type="match status" value="1"/>
</dbReference>
<dbReference type="Pfam" id="PF09285">
    <property type="entry name" value="Elong-fact-P_C"/>
    <property type="match status" value="1"/>
</dbReference>
<dbReference type="PIRSF" id="PIRSF005901">
    <property type="entry name" value="EF-P"/>
    <property type="match status" value="1"/>
</dbReference>
<dbReference type="SMART" id="SM01185">
    <property type="entry name" value="EFP"/>
    <property type="match status" value="1"/>
</dbReference>
<dbReference type="SMART" id="SM00841">
    <property type="entry name" value="Elong-fact-P_C"/>
    <property type="match status" value="1"/>
</dbReference>
<dbReference type="SUPFAM" id="SSF50249">
    <property type="entry name" value="Nucleic acid-binding proteins"/>
    <property type="match status" value="2"/>
</dbReference>
<dbReference type="SUPFAM" id="SSF50104">
    <property type="entry name" value="Translation proteins SH3-like domain"/>
    <property type="match status" value="1"/>
</dbReference>
<dbReference type="PROSITE" id="PS01275">
    <property type="entry name" value="EFP"/>
    <property type="match status" value="1"/>
</dbReference>
<reference key="1">
    <citation type="journal article" date="2006" name="Mol. Microbiol.">
        <title>Role of pathogenicity island-associated integrases in the genome plasticity of uropathogenic Escherichia coli strain 536.</title>
        <authorList>
            <person name="Hochhut B."/>
            <person name="Wilde C."/>
            <person name="Balling G."/>
            <person name="Middendorf B."/>
            <person name="Dobrindt U."/>
            <person name="Brzuszkiewicz E."/>
            <person name="Gottschalk G."/>
            <person name="Carniel E."/>
            <person name="Hacker J."/>
        </authorList>
    </citation>
    <scope>NUCLEOTIDE SEQUENCE [LARGE SCALE GENOMIC DNA]</scope>
    <source>
        <strain>536 / UPEC</strain>
    </source>
</reference>
<gene>
    <name evidence="1" type="primary">efp</name>
    <name type="ordered locus">ECP_4391</name>
</gene>
<sequence length="188" mass="20591">MATYYSNDFRAGLKIMLDGEPYAVEASEFVKPGKGQAFARVKLRRLLTGTRVEKTFKSTDSAEGADVVDMNLTYLYNDGEFWHFMNNETFEQLSADAKAIGDNAKWLLDQAECIVTLWNGQPISVTPPNFVELEIVDTDPGLKGDTAGTGGKPATLSTGAVVKVPLFVQIGEVIKVDTRSGEYVSRVK</sequence>
<organism>
    <name type="scientific">Escherichia coli O6:K15:H31 (strain 536 / UPEC)</name>
    <dbReference type="NCBI Taxonomy" id="362663"/>
    <lineage>
        <taxon>Bacteria</taxon>
        <taxon>Pseudomonadati</taxon>
        <taxon>Pseudomonadota</taxon>
        <taxon>Gammaproteobacteria</taxon>
        <taxon>Enterobacterales</taxon>
        <taxon>Enterobacteriaceae</taxon>
        <taxon>Escherichia</taxon>
    </lineage>
</organism>
<name>EFP_ECOL5</name>
<protein>
    <recommendedName>
        <fullName evidence="1">Elongation factor P</fullName>
        <shortName evidence="1">EF-P</shortName>
    </recommendedName>
</protein>
<feature type="chain" id="PRO_1000010735" description="Elongation factor P">
    <location>
        <begin position="1"/>
        <end position="188"/>
    </location>
</feature>
<feature type="modified residue" description="N6-(3,6-diaminohexanoyl)-5-hydroxylysine" evidence="1">
    <location>
        <position position="34"/>
    </location>
</feature>
<evidence type="ECO:0000255" key="1">
    <source>
        <dbReference type="HAMAP-Rule" id="MF_00141"/>
    </source>
</evidence>